<comment type="subcellular location">
    <subcellularLocation>
        <location evidence="1">Secreted</location>
        <location evidence="1">Cell wall</location>
    </subcellularLocation>
</comment>
<evidence type="ECO:0000269" key="1">
    <source>
    </source>
</evidence>
<evidence type="ECO:0000303" key="2">
    <source>
    </source>
</evidence>
<evidence type="ECO:0000305" key="3"/>
<protein>
    <recommendedName>
        <fullName>28 kDa cell wall protein</fullName>
    </recommendedName>
</protein>
<feature type="chain" id="PRO_0000079707" description="28 kDa cell wall protein">
    <location>
        <begin position="1"/>
        <end position="10" status="greater than"/>
    </location>
</feature>
<feature type="non-terminal residue" evidence="2">
    <location>
        <position position="10"/>
    </location>
</feature>
<accession>P82434</accession>
<reference evidence="3" key="1">
    <citation type="journal article" date="2001" name="Planta">
        <title>Proteomic analysis reveals a novel set of cell wall proteins in a transformed tobacco cell culture that synthesises secondary walls as determined by biochemical and morphological parameters.</title>
        <authorList>
            <person name="Blee K.A."/>
            <person name="Wheatley E.R."/>
            <person name="Bonham V.A."/>
            <person name="Mitchell G.P."/>
            <person name="Robertson D."/>
            <person name="Slabas A.R."/>
            <person name="Burrell M.M."/>
            <person name="Wojtaszek P."/>
            <person name="Bolwell G.P."/>
        </authorList>
    </citation>
    <scope>PROTEIN SEQUENCE</scope>
    <scope>SUBCELLULAR LOCATION</scope>
    <source>
        <strain evidence="1">cv. Petit Havana</strain>
    </source>
</reference>
<name>CWP26_TOBAC</name>
<proteinExistence type="evidence at protein level"/>
<keyword id="KW-0134">Cell wall</keyword>
<keyword id="KW-0903">Direct protein sequencing</keyword>
<keyword id="KW-1185">Reference proteome</keyword>
<keyword id="KW-0964">Secreted</keyword>
<dbReference type="PaxDb" id="4097-P82434"/>
<dbReference type="Proteomes" id="UP000084051">
    <property type="component" value="Unplaced"/>
</dbReference>
<dbReference type="GO" id="GO:0005576">
    <property type="term" value="C:extracellular region"/>
    <property type="evidence" value="ECO:0007669"/>
    <property type="project" value="UniProtKB-KW"/>
</dbReference>
<organism>
    <name type="scientific">Nicotiana tabacum</name>
    <name type="common">Common tobacco</name>
    <dbReference type="NCBI Taxonomy" id="4097"/>
    <lineage>
        <taxon>Eukaryota</taxon>
        <taxon>Viridiplantae</taxon>
        <taxon>Streptophyta</taxon>
        <taxon>Embryophyta</taxon>
        <taxon>Tracheophyta</taxon>
        <taxon>Spermatophyta</taxon>
        <taxon>Magnoliopsida</taxon>
        <taxon>eudicotyledons</taxon>
        <taxon>Gunneridae</taxon>
        <taxon>Pentapetalae</taxon>
        <taxon>asterids</taxon>
        <taxon>lamiids</taxon>
        <taxon>Solanales</taxon>
        <taxon>Solanaceae</taxon>
        <taxon>Nicotianoideae</taxon>
        <taxon>Nicotianeae</taxon>
        <taxon>Nicotiana</taxon>
    </lineage>
</organism>
<sequence length="10" mass="1055">GXNNVDAARK</sequence>